<reference key="1">
    <citation type="journal article" date="1982" name="J. Biol. Chem.">
        <title>Structure and heme environment of ferrocytochrome c553 from 1H NMR studies.</title>
        <authorList>
            <person name="Ulrich E.L."/>
            <person name="Krogmann D.W."/>
            <person name="Markley J.L."/>
        </authorList>
    </citation>
    <scope>PROTEIN SEQUENCE</scope>
</reference>
<reference key="2">
    <citation type="journal article" date="1976" name="Nature">
        <title>Protein evolution in cyanobacteria.</title>
        <authorList>
            <person name="Aitken A."/>
        </authorList>
    </citation>
    <scope>PROTEIN SEQUENCE OF 1-22; 30-39 AND 56-86</scope>
</reference>
<evidence type="ECO:0000250" key="1"/>
<evidence type="ECO:0000305" key="2"/>
<dbReference type="PIR" id="S22481">
    <property type="entry name" value="CCAI53"/>
</dbReference>
<dbReference type="GO" id="GO:0031979">
    <property type="term" value="C:plasma membrane-derived thylakoid lumen"/>
    <property type="evidence" value="ECO:0007669"/>
    <property type="project" value="UniProtKB-SubCell"/>
</dbReference>
<dbReference type="GO" id="GO:0009055">
    <property type="term" value="F:electron transfer activity"/>
    <property type="evidence" value="ECO:0007669"/>
    <property type="project" value="UniProtKB-UniRule"/>
</dbReference>
<dbReference type="GO" id="GO:0020037">
    <property type="term" value="F:heme binding"/>
    <property type="evidence" value="ECO:0007669"/>
    <property type="project" value="InterPro"/>
</dbReference>
<dbReference type="GO" id="GO:0005506">
    <property type="term" value="F:iron ion binding"/>
    <property type="evidence" value="ECO:0007669"/>
    <property type="project" value="InterPro"/>
</dbReference>
<dbReference type="GO" id="GO:0015979">
    <property type="term" value="P:photosynthesis"/>
    <property type="evidence" value="ECO:0007669"/>
    <property type="project" value="UniProtKB-UniRule"/>
</dbReference>
<dbReference type="FunFam" id="1.10.760.10:FF:000038">
    <property type="entry name" value="Cytochrome c6"/>
    <property type="match status" value="1"/>
</dbReference>
<dbReference type="Gene3D" id="1.10.760.10">
    <property type="entry name" value="Cytochrome c-like domain"/>
    <property type="match status" value="1"/>
</dbReference>
<dbReference type="HAMAP" id="MF_00594">
    <property type="entry name" value="Cytc_PetJ"/>
    <property type="match status" value="1"/>
</dbReference>
<dbReference type="InterPro" id="IPR009056">
    <property type="entry name" value="Cyt_c-like_dom"/>
</dbReference>
<dbReference type="InterPro" id="IPR036909">
    <property type="entry name" value="Cyt_c-like_dom_sf"/>
</dbReference>
<dbReference type="InterPro" id="IPR023655">
    <property type="entry name" value="Cyt_C6"/>
</dbReference>
<dbReference type="InterPro" id="IPR008168">
    <property type="entry name" value="Cyt_C_IC"/>
</dbReference>
<dbReference type="PANTHER" id="PTHR34688">
    <property type="entry name" value="CYTOCHROME C6, CHLOROPLASTIC"/>
    <property type="match status" value="1"/>
</dbReference>
<dbReference type="PANTHER" id="PTHR34688:SF2">
    <property type="entry name" value="CYTOCHROME C6, CHLOROPLASTIC"/>
    <property type="match status" value="1"/>
</dbReference>
<dbReference type="Pfam" id="PF13442">
    <property type="entry name" value="Cytochrome_CBB3"/>
    <property type="match status" value="1"/>
</dbReference>
<dbReference type="PRINTS" id="PR00605">
    <property type="entry name" value="CYTCHROMECIC"/>
</dbReference>
<dbReference type="SUPFAM" id="SSF46626">
    <property type="entry name" value="Cytochrome c"/>
    <property type="match status" value="1"/>
</dbReference>
<dbReference type="PROSITE" id="PS51007">
    <property type="entry name" value="CYTC"/>
    <property type="match status" value="1"/>
</dbReference>
<proteinExistence type="evidence at protein level"/>
<feature type="chain" id="PRO_0000228717" description="Cytochrome c6">
    <location>
        <begin position="1"/>
        <end position="86"/>
    </location>
</feature>
<feature type="binding site" description="covalent" evidence="1">
    <location>
        <position position="14"/>
    </location>
    <ligand>
        <name>heme c</name>
        <dbReference type="ChEBI" id="CHEBI:61717"/>
    </ligand>
</feature>
<feature type="binding site" description="covalent" evidence="1">
    <location>
        <position position="17"/>
    </location>
    <ligand>
        <name>heme c</name>
        <dbReference type="ChEBI" id="CHEBI:61717"/>
    </ligand>
</feature>
<feature type="binding site" description="axial binding residue" evidence="1">
    <location>
        <position position="18"/>
    </location>
    <ligand>
        <name>heme c</name>
        <dbReference type="ChEBI" id="CHEBI:61717"/>
    </ligand>
    <ligandPart>
        <name>Fe</name>
        <dbReference type="ChEBI" id="CHEBI:18248"/>
    </ligandPart>
</feature>
<feature type="binding site" description="axial binding residue" evidence="1">
    <location>
        <position position="58"/>
    </location>
    <ligand>
        <name>heme c</name>
        <dbReference type="ChEBI" id="CHEBI:61717"/>
    </ligand>
    <ligandPart>
        <name>Fe</name>
        <dbReference type="ChEBI" id="CHEBI:18248"/>
    </ligandPart>
</feature>
<feature type="sequence conflict" description="In Ref. 2; AA sequence." evidence="2" ref="2">
    <original>EAE</original>
    <variation>DAD</variation>
    <location>
        <begin position="82"/>
        <end position="84"/>
    </location>
</feature>
<keyword id="KW-0903">Direct protein sequencing</keyword>
<keyword id="KW-0249">Electron transport</keyword>
<keyword id="KW-0349">Heme</keyword>
<keyword id="KW-0408">Iron</keyword>
<keyword id="KW-0479">Metal-binding</keyword>
<keyword id="KW-0602">Photosynthesis</keyword>
<keyword id="KW-0793">Thylakoid</keyword>
<keyword id="KW-0813">Transport</keyword>
<protein>
    <recommendedName>
        <fullName>Cytochrome c6</fullName>
    </recommendedName>
    <alternativeName>
        <fullName>Cytochrome c-553</fullName>
    </alternativeName>
    <alternativeName>
        <fullName>Cytochrome c553</fullName>
    </alternativeName>
    <alternativeName>
        <fullName>Soluble cytochrome f</fullName>
    </alternativeName>
</protein>
<name>CYC6_ANAVA</name>
<sequence length="86" mass="8953">ADSVNGAKIFSANCASCHAGGKNLGVAQKTLKKADLEKYGAYSAMAIGAQVTNGKNAMPAFKGRLKPEEIXXVAAYVLGKAEAEWK</sequence>
<organism>
    <name type="scientific">Anabaena variabilis</name>
    <dbReference type="NCBI Taxonomy" id="264691"/>
    <lineage>
        <taxon>Bacteria</taxon>
        <taxon>Bacillati</taxon>
        <taxon>Cyanobacteriota</taxon>
        <taxon>Cyanophyceae</taxon>
        <taxon>Nostocales</taxon>
        <taxon>Nostocaceae</taxon>
        <taxon>Trichormus</taxon>
    </lineage>
</organism>
<comment type="function">
    <text>Functions as an electron carrier between membrane-bound cytochrome b6-f and photosystem I in oxygenic photosynthesis.</text>
</comment>
<comment type="subunit">
    <text evidence="1">Monomer.</text>
</comment>
<comment type="subcellular location">
    <subcellularLocation>
        <location evidence="2">Cellular thylakoid lumen</location>
    </subcellularLocation>
</comment>
<comment type="PTM">
    <text evidence="1">Binds 1 heme c group covalently per subunit.</text>
</comment>
<comment type="similarity">
    <text evidence="2">Belongs to the cytochrome c family. PetJ subfamily.</text>
</comment>
<comment type="caution">
    <text evidence="2">The order of amino acids 43-45 has not been definitively determined.</text>
</comment>
<accession>P0C180</accession>
<accession>P00113</accession>
<accession>P28597</accession>
<accession>P80062</accession>
<gene>
    <name type="primary">petJ</name>
</gene>